<comment type="function">
    <text evidence="1">One of two assembly initiator proteins, it binds directly to the 5'-end of the 23S rRNA, where it nucleates assembly of the 50S subunit.</text>
</comment>
<comment type="function">
    <text evidence="1">One of the proteins that surrounds the polypeptide exit tunnel on the outside of the subunit.</text>
</comment>
<comment type="subunit">
    <text evidence="1">Part of the 50S ribosomal subunit.</text>
</comment>
<comment type="similarity">
    <text evidence="1">Belongs to the universal ribosomal protein uL24 family.</text>
</comment>
<protein>
    <recommendedName>
        <fullName evidence="1">Large ribosomal subunit protein uL24</fullName>
    </recommendedName>
    <alternativeName>
        <fullName evidence="2">50S ribosomal protein L24</fullName>
    </alternativeName>
</protein>
<accession>Q03IG2</accession>
<feature type="chain" id="PRO_1000052328" description="Large ribosomal subunit protein uL24">
    <location>
        <begin position="1"/>
        <end position="101"/>
    </location>
</feature>
<organism>
    <name type="scientific">Streptococcus thermophilus (strain ATCC BAA-491 / LMD-9)</name>
    <dbReference type="NCBI Taxonomy" id="322159"/>
    <lineage>
        <taxon>Bacteria</taxon>
        <taxon>Bacillati</taxon>
        <taxon>Bacillota</taxon>
        <taxon>Bacilli</taxon>
        <taxon>Lactobacillales</taxon>
        <taxon>Streptococcaceae</taxon>
        <taxon>Streptococcus</taxon>
    </lineage>
</organism>
<sequence length="101" mass="10841">MFVKKGDKVRVIAGKDKGTEAVVLKALPKVNKVVVEGVAIIKKHQKPSAENPQGAIVEKEAPIHASNVQVLDKNGVAGRVGYKVVDGKKVRYNKKSGEVLD</sequence>
<gene>
    <name evidence="1" type="primary">rplX</name>
    <name type="ordered locus">STER_1896</name>
</gene>
<reference key="1">
    <citation type="journal article" date="2006" name="Proc. Natl. Acad. Sci. U.S.A.">
        <title>Comparative genomics of the lactic acid bacteria.</title>
        <authorList>
            <person name="Makarova K.S."/>
            <person name="Slesarev A."/>
            <person name="Wolf Y.I."/>
            <person name="Sorokin A."/>
            <person name="Mirkin B."/>
            <person name="Koonin E.V."/>
            <person name="Pavlov A."/>
            <person name="Pavlova N."/>
            <person name="Karamychev V."/>
            <person name="Polouchine N."/>
            <person name="Shakhova V."/>
            <person name="Grigoriev I."/>
            <person name="Lou Y."/>
            <person name="Rohksar D."/>
            <person name="Lucas S."/>
            <person name="Huang K."/>
            <person name="Goodstein D.M."/>
            <person name="Hawkins T."/>
            <person name="Plengvidhya V."/>
            <person name="Welker D."/>
            <person name="Hughes J."/>
            <person name="Goh Y."/>
            <person name="Benson A."/>
            <person name="Baldwin K."/>
            <person name="Lee J.-H."/>
            <person name="Diaz-Muniz I."/>
            <person name="Dosti B."/>
            <person name="Smeianov V."/>
            <person name="Wechter W."/>
            <person name="Barabote R."/>
            <person name="Lorca G."/>
            <person name="Altermann E."/>
            <person name="Barrangou R."/>
            <person name="Ganesan B."/>
            <person name="Xie Y."/>
            <person name="Rawsthorne H."/>
            <person name="Tamir D."/>
            <person name="Parker C."/>
            <person name="Breidt F."/>
            <person name="Broadbent J.R."/>
            <person name="Hutkins R."/>
            <person name="O'Sullivan D."/>
            <person name="Steele J."/>
            <person name="Unlu G."/>
            <person name="Saier M.H. Jr."/>
            <person name="Klaenhammer T."/>
            <person name="Richardson P."/>
            <person name="Kozyavkin S."/>
            <person name="Weimer B.C."/>
            <person name="Mills D.A."/>
        </authorList>
    </citation>
    <scope>NUCLEOTIDE SEQUENCE [LARGE SCALE GENOMIC DNA]</scope>
    <source>
        <strain>ATCC BAA-491 / LMD-9</strain>
    </source>
</reference>
<evidence type="ECO:0000255" key="1">
    <source>
        <dbReference type="HAMAP-Rule" id="MF_01326"/>
    </source>
</evidence>
<evidence type="ECO:0000305" key="2"/>
<name>RL24_STRTD</name>
<proteinExistence type="inferred from homology"/>
<dbReference type="EMBL" id="CP000419">
    <property type="protein sequence ID" value="ABJ67010.1"/>
    <property type="molecule type" value="Genomic_DNA"/>
</dbReference>
<dbReference type="RefSeq" id="WP_002885874.1">
    <property type="nucleotide sequence ID" value="NC_008532.1"/>
</dbReference>
<dbReference type="SMR" id="Q03IG2"/>
<dbReference type="GeneID" id="93793075"/>
<dbReference type="KEGG" id="ste:STER_1896"/>
<dbReference type="HOGENOM" id="CLU_093315_2_0_9"/>
<dbReference type="GO" id="GO:1990904">
    <property type="term" value="C:ribonucleoprotein complex"/>
    <property type="evidence" value="ECO:0007669"/>
    <property type="project" value="UniProtKB-KW"/>
</dbReference>
<dbReference type="GO" id="GO:0005840">
    <property type="term" value="C:ribosome"/>
    <property type="evidence" value="ECO:0007669"/>
    <property type="project" value="UniProtKB-KW"/>
</dbReference>
<dbReference type="GO" id="GO:0019843">
    <property type="term" value="F:rRNA binding"/>
    <property type="evidence" value="ECO:0007669"/>
    <property type="project" value="UniProtKB-UniRule"/>
</dbReference>
<dbReference type="GO" id="GO:0003735">
    <property type="term" value="F:structural constituent of ribosome"/>
    <property type="evidence" value="ECO:0007669"/>
    <property type="project" value="InterPro"/>
</dbReference>
<dbReference type="GO" id="GO:0006412">
    <property type="term" value="P:translation"/>
    <property type="evidence" value="ECO:0007669"/>
    <property type="project" value="UniProtKB-UniRule"/>
</dbReference>
<dbReference type="CDD" id="cd06089">
    <property type="entry name" value="KOW_RPL26"/>
    <property type="match status" value="1"/>
</dbReference>
<dbReference type="FunFam" id="2.30.30.30:FF:000004">
    <property type="entry name" value="50S ribosomal protein L24"/>
    <property type="match status" value="1"/>
</dbReference>
<dbReference type="Gene3D" id="2.30.30.30">
    <property type="match status" value="1"/>
</dbReference>
<dbReference type="HAMAP" id="MF_01326_B">
    <property type="entry name" value="Ribosomal_uL24_B"/>
    <property type="match status" value="1"/>
</dbReference>
<dbReference type="InterPro" id="IPR005824">
    <property type="entry name" value="KOW"/>
</dbReference>
<dbReference type="InterPro" id="IPR014722">
    <property type="entry name" value="Rib_uL2_dom2"/>
</dbReference>
<dbReference type="InterPro" id="IPR003256">
    <property type="entry name" value="Ribosomal_uL24"/>
</dbReference>
<dbReference type="InterPro" id="IPR005825">
    <property type="entry name" value="Ribosomal_uL24_CS"/>
</dbReference>
<dbReference type="InterPro" id="IPR041988">
    <property type="entry name" value="Ribosomal_uL24_KOW"/>
</dbReference>
<dbReference type="InterPro" id="IPR008991">
    <property type="entry name" value="Translation_prot_SH3-like_sf"/>
</dbReference>
<dbReference type="NCBIfam" id="TIGR01079">
    <property type="entry name" value="rplX_bact"/>
    <property type="match status" value="1"/>
</dbReference>
<dbReference type="PANTHER" id="PTHR12903">
    <property type="entry name" value="MITOCHONDRIAL RIBOSOMAL PROTEIN L24"/>
    <property type="match status" value="1"/>
</dbReference>
<dbReference type="Pfam" id="PF00467">
    <property type="entry name" value="KOW"/>
    <property type="match status" value="1"/>
</dbReference>
<dbReference type="Pfam" id="PF17136">
    <property type="entry name" value="ribosomal_L24"/>
    <property type="match status" value="1"/>
</dbReference>
<dbReference type="SMART" id="SM00739">
    <property type="entry name" value="KOW"/>
    <property type="match status" value="1"/>
</dbReference>
<dbReference type="SUPFAM" id="SSF50104">
    <property type="entry name" value="Translation proteins SH3-like domain"/>
    <property type="match status" value="1"/>
</dbReference>
<dbReference type="PROSITE" id="PS01108">
    <property type="entry name" value="RIBOSOMAL_L24"/>
    <property type="match status" value="1"/>
</dbReference>
<keyword id="KW-0687">Ribonucleoprotein</keyword>
<keyword id="KW-0689">Ribosomal protein</keyword>
<keyword id="KW-0694">RNA-binding</keyword>
<keyword id="KW-0699">rRNA-binding</keyword>